<organism>
    <name type="scientific">Human cytomegalovirus (strain AD169)</name>
    <name type="common">HHV-5</name>
    <name type="synonym">Human herpesvirus 5</name>
    <dbReference type="NCBI Taxonomy" id="10360"/>
    <lineage>
        <taxon>Viruses</taxon>
        <taxon>Duplodnaviria</taxon>
        <taxon>Heunggongvirae</taxon>
        <taxon>Peploviricota</taxon>
        <taxon>Herviviricetes</taxon>
        <taxon>Herpesvirales</taxon>
        <taxon>Orthoherpesviridae</taxon>
        <taxon>Betaherpesvirinae</taxon>
        <taxon>Cytomegalovirus</taxon>
        <taxon>Cytomegalovirus humanbeta5</taxon>
        <taxon>Human cytomegalovirus</taxon>
    </lineage>
</organism>
<protein>
    <recommendedName>
        <fullName>Protein TRL14</fullName>
    </recommendedName>
</protein>
<keyword id="KW-0325">Glycoprotein</keyword>
<keyword id="KW-0472">Membrane</keyword>
<keyword id="KW-1185">Reference proteome</keyword>
<keyword id="KW-0812">Transmembrane</keyword>
<keyword id="KW-1133">Transmembrane helix</keyword>
<keyword id="KW-0946">Virion</keyword>
<proteinExistence type="inferred from homology"/>
<feature type="chain" id="PRO_0000115261" description="Protein TRL14">
    <location>
        <begin position="1"/>
        <end position="186"/>
    </location>
</feature>
<feature type="transmembrane region" description="Helical" evidence="1">
    <location>
        <begin position="143"/>
        <end position="163"/>
    </location>
</feature>
<feature type="glycosylation site" description="N-linked (GlcNAc...) asparagine; by host" evidence="1">
    <location>
        <position position="24"/>
    </location>
</feature>
<feature type="glycosylation site" description="N-linked (GlcNAc...) asparagine; by host" evidence="1">
    <location>
        <position position="64"/>
    </location>
</feature>
<feature type="glycosylation site" description="N-linked (GlcNAc...) asparagine; by host" evidence="1">
    <location>
        <position position="72"/>
    </location>
</feature>
<evidence type="ECO:0000255" key="1"/>
<evidence type="ECO:0000305" key="2"/>
<dbReference type="EMBL" id="X17403">
    <property type="protein sequence ID" value="CAA35433.1"/>
    <property type="molecule type" value="Genomic_DNA"/>
</dbReference>
<dbReference type="EMBL" id="BK000394">
    <property type="status" value="NOT_ANNOTATED_CDS"/>
    <property type="molecule type" value="Genomic_DNA"/>
</dbReference>
<dbReference type="PIR" id="S09763">
    <property type="entry name" value="S09763"/>
</dbReference>
<dbReference type="Proteomes" id="UP000008991">
    <property type="component" value="Segment"/>
</dbReference>
<dbReference type="Proteomes" id="UP000008992">
    <property type="component" value="Segment"/>
</dbReference>
<dbReference type="GO" id="GO:0016020">
    <property type="term" value="C:membrane"/>
    <property type="evidence" value="ECO:0007669"/>
    <property type="project" value="UniProtKB-KW"/>
</dbReference>
<dbReference type="GO" id="GO:0055036">
    <property type="term" value="C:virion membrane"/>
    <property type="evidence" value="ECO:0007669"/>
    <property type="project" value="UniProtKB-SubCell"/>
</dbReference>
<sequence length="186" mass="21827">MRPQLRGNQRNRIRWWQHNSKKCNQTEKWHNVDWIHYEYPTHKMCELGNYHQTTPRHDICFDCNDTSLTIYNLTTRNAGKYTRHHRDNGQEENYYVTVLIGDTTLSTLGTCPVRYKESRNTENTIGSNIIKTIEKANIPLGIHAVWAGVVVSVALIALYMGSHRIPKKPHYTKLPKYDPDEFWTKA</sequence>
<organismHost>
    <name type="scientific">Homo sapiens</name>
    <name type="common">Human</name>
    <dbReference type="NCBI Taxonomy" id="9606"/>
</organismHost>
<accession>P21602</accession>
<accession>Q7M6F9</accession>
<reference key="1">
    <citation type="journal article" date="1990" name="Curr. Top. Microbiol. Immunol.">
        <title>Analysis of the protein-coding content of the sequence of human cytomegalovirus strain AD169.</title>
        <authorList>
            <person name="Chee M.S."/>
            <person name="Bankier A.T."/>
            <person name="Beck S."/>
            <person name="Bohni R."/>
            <person name="Brown C.M."/>
            <person name="Cerny R."/>
            <person name="Horsnell T."/>
            <person name="Hutchison C.A. III"/>
            <person name="Kouzarides T."/>
            <person name="Martignetti J.A."/>
            <person name="Preddie E."/>
            <person name="Satchwell S.C."/>
            <person name="Tomlinson P."/>
            <person name="Weston K.M."/>
            <person name="Barrell B.G."/>
        </authorList>
    </citation>
    <scope>NUCLEOTIDE SEQUENCE [LARGE SCALE GENOMIC DNA]</scope>
</reference>
<reference key="2">
    <citation type="journal article" date="2003" name="J. Gen. Virol.">
        <title>The human cytomegalovirus genome revisited: comparison with the chimpanzee cytomegalovirus genome.</title>
        <authorList>
            <person name="Davison A.J."/>
            <person name="Dolan A."/>
            <person name="Akter P."/>
            <person name="Addison C."/>
            <person name="Dargan D.J."/>
            <person name="Alcendor D.J."/>
            <person name="McGeoch D.J."/>
            <person name="Hayward G.S."/>
        </authorList>
    </citation>
    <scope>GENOME REANNOTATION</scope>
</reference>
<reference key="3">
    <citation type="journal article" date="2003" name="J. Gen. Virol.">
        <authorList>
            <person name="Davison A.J."/>
            <person name="Dolan A."/>
            <person name="Akter P."/>
            <person name="Addison C."/>
            <person name="Dargan D.J."/>
            <person name="Alcendor D.J."/>
            <person name="McGeoch D.J."/>
            <person name="Hayward G.S."/>
        </authorList>
    </citation>
    <scope>ERRATUM OF PUBMED:12533697</scope>
</reference>
<reference key="4">
    <citation type="journal article" date="2004" name="J. Virol.">
        <title>Identification of proteins in human cytomegalovirus (HCMV) particles: the HCMV proteome.</title>
        <authorList>
            <person name="Varnum S.M."/>
            <person name="Streblow D.N."/>
            <person name="Monroe M.E."/>
            <person name="Smith P."/>
            <person name="Auberry K.J."/>
            <person name="Pasa-Tolic L."/>
            <person name="Wang D."/>
            <person name="Camp D.G. II"/>
            <person name="Rodland K."/>
            <person name="Wiley S."/>
            <person name="Britt W."/>
            <person name="Shenk T."/>
            <person name="Smith R.D."/>
            <person name="Nelson J.A."/>
        </authorList>
    </citation>
    <scope>IDENTIFICATION</scope>
</reference>
<reference key="5">
    <citation type="journal article" date="2004" name="J. Virol.">
        <authorList>
            <person name="Varnum S.M."/>
            <person name="Streblow D.N."/>
            <person name="Monroe M.E."/>
            <person name="Smith P."/>
            <person name="Auberry K.J."/>
            <person name="Pasa-Tolic L."/>
            <person name="Wang D."/>
            <person name="Camp D.G. II"/>
            <person name="Rodland K."/>
            <person name="Wiley S."/>
            <person name="Britt W."/>
            <person name="Shenk T."/>
            <person name="Smith R.D."/>
            <person name="Nelson J.A."/>
        </authorList>
    </citation>
    <scope>ERRATUM OF PUBMED:15452216</scope>
</reference>
<name>TR14_HCMVA</name>
<comment type="subcellular location">
    <subcellularLocation>
        <location evidence="2">Virion membrane</location>
        <topology evidence="2">Single-pass membrane protein</topology>
    </subcellularLocation>
</comment>
<comment type="similarity">
    <text evidence="2">Belongs to the RL11 family.</text>
</comment>